<accession>A2BME5</accession>
<protein>
    <recommendedName>
        <fullName evidence="1">Large ribosomal subunit protein eL34</fullName>
    </recommendedName>
    <alternativeName>
        <fullName evidence="2">50S ribosomal protein L34e</fullName>
    </alternativeName>
</protein>
<comment type="similarity">
    <text evidence="1">Belongs to the eukaryotic ribosomal protein eL34 family.</text>
</comment>
<evidence type="ECO:0000255" key="1">
    <source>
        <dbReference type="HAMAP-Rule" id="MF_00349"/>
    </source>
</evidence>
<evidence type="ECO:0000305" key="2"/>
<sequence>MPRPHQRTRSLRRVYVRTPGGETKIHYEKRRPGPARCAICGRPLNGVPRLRPVELRKLPKTAKRPERMYGGVLCAECLEKLLKKSIRSQVLAQLEQLRRSVAAGQS</sequence>
<proteinExistence type="inferred from homology"/>
<name>RL34_HYPBU</name>
<organism>
    <name type="scientific">Hyperthermus butylicus (strain DSM 5456 / JCM 9403 / PLM1-5)</name>
    <dbReference type="NCBI Taxonomy" id="415426"/>
    <lineage>
        <taxon>Archaea</taxon>
        <taxon>Thermoproteota</taxon>
        <taxon>Thermoprotei</taxon>
        <taxon>Desulfurococcales</taxon>
        <taxon>Pyrodictiaceae</taxon>
        <taxon>Hyperthermus</taxon>
    </lineage>
</organism>
<keyword id="KW-1185">Reference proteome</keyword>
<keyword id="KW-0687">Ribonucleoprotein</keyword>
<keyword id="KW-0689">Ribosomal protein</keyword>
<dbReference type="EMBL" id="CP000493">
    <property type="protein sequence ID" value="ABM81156.1"/>
    <property type="molecule type" value="Genomic_DNA"/>
</dbReference>
<dbReference type="RefSeq" id="WP_011822474.1">
    <property type="nucleotide sequence ID" value="NC_008818.1"/>
</dbReference>
<dbReference type="SMR" id="A2BME5"/>
<dbReference type="STRING" id="415426.Hbut_1326"/>
<dbReference type="EnsemblBacteria" id="ABM81156">
    <property type="protein sequence ID" value="ABM81156"/>
    <property type="gene ID" value="Hbut_1326"/>
</dbReference>
<dbReference type="GeneID" id="4781633"/>
<dbReference type="KEGG" id="hbu:Hbut_1326"/>
<dbReference type="eggNOG" id="arCOG04168">
    <property type="taxonomic scope" value="Archaea"/>
</dbReference>
<dbReference type="HOGENOM" id="CLU_118652_2_0_2"/>
<dbReference type="OrthoDB" id="43096at2157"/>
<dbReference type="Proteomes" id="UP000002593">
    <property type="component" value="Chromosome"/>
</dbReference>
<dbReference type="GO" id="GO:1990904">
    <property type="term" value="C:ribonucleoprotein complex"/>
    <property type="evidence" value="ECO:0007669"/>
    <property type="project" value="UniProtKB-KW"/>
</dbReference>
<dbReference type="GO" id="GO:0005840">
    <property type="term" value="C:ribosome"/>
    <property type="evidence" value="ECO:0007669"/>
    <property type="project" value="UniProtKB-KW"/>
</dbReference>
<dbReference type="GO" id="GO:0003735">
    <property type="term" value="F:structural constituent of ribosome"/>
    <property type="evidence" value="ECO:0007669"/>
    <property type="project" value="InterPro"/>
</dbReference>
<dbReference type="GO" id="GO:0006412">
    <property type="term" value="P:translation"/>
    <property type="evidence" value="ECO:0007669"/>
    <property type="project" value="UniProtKB-UniRule"/>
</dbReference>
<dbReference type="Gene3D" id="6.20.340.10">
    <property type="match status" value="1"/>
</dbReference>
<dbReference type="HAMAP" id="MF_00349">
    <property type="entry name" value="Ribosomal_eL34"/>
    <property type="match status" value="1"/>
</dbReference>
<dbReference type="InterPro" id="IPR008195">
    <property type="entry name" value="Ribosomal_eL34"/>
</dbReference>
<dbReference type="InterPro" id="IPR038562">
    <property type="entry name" value="Ribosomal_eL34_C_sf"/>
</dbReference>
<dbReference type="InterPro" id="IPR018065">
    <property type="entry name" value="Ribosomal_eL34_CS"/>
</dbReference>
<dbReference type="InterPro" id="IPR047868">
    <property type="entry name" value="Ribosomal_L34e_arc-type"/>
</dbReference>
<dbReference type="NCBIfam" id="NF003143">
    <property type="entry name" value="PRK04059.1"/>
    <property type="match status" value="1"/>
</dbReference>
<dbReference type="PANTHER" id="PTHR10759">
    <property type="entry name" value="60S RIBOSOMAL PROTEIN L34"/>
    <property type="match status" value="1"/>
</dbReference>
<dbReference type="Pfam" id="PF01199">
    <property type="entry name" value="Ribosomal_L34e"/>
    <property type="match status" value="1"/>
</dbReference>
<dbReference type="PRINTS" id="PR01250">
    <property type="entry name" value="RIBOSOMALL34"/>
</dbReference>
<dbReference type="PROSITE" id="PS01145">
    <property type="entry name" value="RIBOSOMAL_L34E"/>
    <property type="match status" value="1"/>
</dbReference>
<gene>
    <name evidence="1" type="primary">rpl34e</name>
    <name type="ordered locus">Hbut_1326</name>
</gene>
<reference key="1">
    <citation type="journal article" date="2007" name="Archaea">
        <title>The genome of Hyperthermus butylicus: a sulfur-reducing, peptide fermenting, neutrophilic Crenarchaeote growing up to 108 degrees C.</title>
        <authorList>
            <person name="Bruegger K."/>
            <person name="Chen L."/>
            <person name="Stark M."/>
            <person name="Zibat A."/>
            <person name="Redder P."/>
            <person name="Ruepp A."/>
            <person name="Awayez M."/>
            <person name="She Q."/>
            <person name="Garrett R.A."/>
            <person name="Klenk H.-P."/>
        </authorList>
    </citation>
    <scope>NUCLEOTIDE SEQUENCE [LARGE SCALE GENOMIC DNA]</scope>
    <source>
        <strain>DSM 5456 / JCM 9403 / PLM1-5</strain>
    </source>
</reference>
<feature type="chain" id="PRO_1000006928" description="Large ribosomal subunit protein eL34">
    <location>
        <begin position="1"/>
        <end position="106"/>
    </location>
</feature>